<dbReference type="EC" id="1.1.1.282" evidence="1"/>
<dbReference type="EMBL" id="AE014075">
    <property type="protein sequence ID" value="AAN80547.1"/>
    <property type="molecule type" value="Genomic_DNA"/>
</dbReference>
<dbReference type="RefSeq" id="WP_000383469.1">
    <property type="nucleotide sequence ID" value="NZ_CP051263.1"/>
</dbReference>
<dbReference type="SMR" id="P0A6D6"/>
<dbReference type="STRING" id="199310.c2087"/>
<dbReference type="GeneID" id="75171755"/>
<dbReference type="KEGG" id="ecc:c2087"/>
<dbReference type="eggNOG" id="COG0169">
    <property type="taxonomic scope" value="Bacteria"/>
</dbReference>
<dbReference type="HOGENOM" id="CLU_044063_4_4_6"/>
<dbReference type="BioCyc" id="ECOL199310:C2087-MONOMER"/>
<dbReference type="UniPathway" id="UPA00053">
    <property type="reaction ID" value="UER00087"/>
</dbReference>
<dbReference type="Proteomes" id="UP000001410">
    <property type="component" value="Chromosome"/>
</dbReference>
<dbReference type="GO" id="GO:0030266">
    <property type="term" value="F:quinate 3-dehydrogenase (NAD+) activity"/>
    <property type="evidence" value="ECO:0007669"/>
    <property type="project" value="UniProtKB-UniRule"/>
</dbReference>
<dbReference type="GO" id="GO:0052733">
    <property type="term" value="F:quinate 3-dehydrogenase (NADP+) activity"/>
    <property type="evidence" value="ECO:0007669"/>
    <property type="project" value="InterPro"/>
</dbReference>
<dbReference type="GO" id="GO:0052734">
    <property type="term" value="F:shikimate 3-dehydrogenase (NAD+) activity"/>
    <property type="evidence" value="ECO:0007669"/>
    <property type="project" value="InterPro"/>
</dbReference>
<dbReference type="GO" id="GO:0004764">
    <property type="term" value="F:shikimate 3-dehydrogenase (NADP+) activity"/>
    <property type="evidence" value="ECO:0007669"/>
    <property type="project" value="UniProtKB-UniRule"/>
</dbReference>
<dbReference type="GO" id="GO:0008652">
    <property type="term" value="P:amino acid biosynthetic process"/>
    <property type="evidence" value="ECO:0007669"/>
    <property type="project" value="UniProtKB-KW"/>
</dbReference>
<dbReference type="GO" id="GO:0009073">
    <property type="term" value="P:aromatic amino acid family biosynthetic process"/>
    <property type="evidence" value="ECO:0007669"/>
    <property type="project" value="UniProtKB-KW"/>
</dbReference>
<dbReference type="GO" id="GO:0009423">
    <property type="term" value="P:chorismate biosynthetic process"/>
    <property type="evidence" value="ECO:0007669"/>
    <property type="project" value="UniProtKB-UniRule"/>
</dbReference>
<dbReference type="GO" id="GO:0019632">
    <property type="term" value="P:shikimate metabolic process"/>
    <property type="evidence" value="ECO:0007669"/>
    <property type="project" value="TreeGrafter"/>
</dbReference>
<dbReference type="CDD" id="cd01065">
    <property type="entry name" value="NAD_bind_Shikimate_DH"/>
    <property type="match status" value="1"/>
</dbReference>
<dbReference type="FunFam" id="3.40.50.10860:FF:000004">
    <property type="entry name" value="Quinate/shikimate dehydrogenase"/>
    <property type="match status" value="1"/>
</dbReference>
<dbReference type="FunFam" id="3.40.50.720:FF:000086">
    <property type="entry name" value="Quinate/shikimate dehydrogenase"/>
    <property type="match status" value="1"/>
</dbReference>
<dbReference type="Gene3D" id="3.40.50.10860">
    <property type="entry name" value="Leucine Dehydrogenase, chain A, domain 1"/>
    <property type="match status" value="1"/>
</dbReference>
<dbReference type="Gene3D" id="3.40.50.720">
    <property type="entry name" value="NAD(P)-binding Rossmann-like Domain"/>
    <property type="match status" value="1"/>
</dbReference>
<dbReference type="HAMAP" id="MF_00222">
    <property type="entry name" value="Shikimate_DH_AroE"/>
    <property type="match status" value="1"/>
</dbReference>
<dbReference type="HAMAP" id="MF_01578">
    <property type="entry name" value="Shikimate_DH_YdiB"/>
    <property type="match status" value="1"/>
</dbReference>
<dbReference type="InterPro" id="IPR046346">
    <property type="entry name" value="Aminoacid_DH-like_N_sf"/>
</dbReference>
<dbReference type="InterPro" id="IPR036291">
    <property type="entry name" value="NAD(P)-bd_dom_sf"/>
</dbReference>
<dbReference type="InterPro" id="IPR022872">
    <property type="entry name" value="Quinate/Shikimate_DH"/>
</dbReference>
<dbReference type="InterPro" id="IPR041121">
    <property type="entry name" value="SDH_C"/>
</dbReference>
<dbReference type="InterPro" id="IPR013708">
    <property type="entry name" value="Shikimate_DH-bd_N"/>
</dbReference>
<dbReference type="InterPro" id="IPR022893">
    <property type="entry name" value="Shikimate_DH_fam"/>
</dbReference>
<dbReference type="NCBIfam" id="NF009390">
    <property type="entry name" value="PRK12749.1"/>
    <property type="match status" value="1"/>
</dbReference>
<dbReference type="PANTHER" id="PTHR21089:SF1">
    <property type="entry name" value="BIFUNCTIONAL 3-DEHYDROQUINATE DEHYDRATASE_SHIKIMATE DEHYDROGENASE, CHLOROPLASTIC"/>
    <property type="match status" value="1"/>
</dbReference>
<dbReference type="PANTHER" id="PTHR21089">
    <property type="entry name" value="SHIKIMATE DEHYDROGENASE"/>
    <property type="match status" value="1"/>
</dbReference>
<dbReference type="Pfam" id="PF18317">
    <property type="entry name" value="SDH_C"/>
    <property type="match status" value="1"/>
</dbReference>
<dbReference type="Pfam" id="PF08501">
    <property type="entry name" value="Shikimate_dh_N"/>
    <property type="match status" value="1"/>
</dbReference>
<dbReference type="SUPFAM" id="SSF53223">
    <property type="entry name" value="Aminoacid dehydrogenase-like, N-terminal domain"/>
    <property type="match status" value="1"/>
</dbReference>
<dbReference type="SUPFAM" id="SSF51735">
    <property type="entry name" value="NAD(P)-binding Rossmann-fold domains"/>
    <property type="match status" value="1"/>
</dbReference>
<protein>
    <recommendedName>
        <fullName evidence="1">Quinate/shikimate dehydrogenase</fullName>
        <ecNumber evidence="1">1.1.1.282</ecNumber>
    </recommendedName>
    <alternativeName>
        <fullName evidence="1">NAD-dependent shikimate 5-dehydrogenase</fullName>
    </alternativeName>
</protein>
<sequence length="288" mass="31228">MDVTAKYELIGLMAYPIRHSLSPEMQNKALEKAGLPFTYMAFEVDNDSFPGAIEGLKALKMRGTGVSMPNKQLACEYVDELTPAAKLVGAINTIVNDDGYLRGYNTDGTGHIRAIKESGFDIKGKTMVLLGAGGASTAIGAQGAIEGLKEIKLFNRRDEFFDKALAFAQRVNENTDCVVTVTDLADQQAFAEALASADILTNGTKVGMKPLENESLVNDISLLHPGLLVTECVYNPHMTKLLQQAQQAGCKTIDGYGMLLWQGAEQFTLWTGKDFPLEYVKQVMGFGA</sequence>
<reference key="1">
    <citation type="journal article" date="2002" name="Proc. Natl. Acad. Sci. U.S.A.">
        <title>Extensive mosaic structure revealed by the complete genome sequence of uropathogenic Escherichia coli.</title>
        <authorList>
            <person name="Welch R.A."/>
            <person name="Burland V."/>
            <person name="Plunkett G. III"/>
            <person name="Redford P."/>
            <person name="Roesch P."/>
            <person name="Rasko D."/>
            <person name="Buckles E.L."/>
            <person name="Liou S.-R."/>
            <person name="Boutin A."/>
            <person name="Hackett J."/>
            <person name="Stroud D."/>
            <person name="Mayhew G.F."/>
            <person name="Rose D.J."/>
            <person name="Zhou S."/>
            <person name="Schwartz D.C."/>
            <person name="Perna N.T."/>
            <person name="Mobley H.L.T."/>
            <person name="Donnenberg M.S."/>
            <person name="Blattner F.R."/>
        </authorList>
    </citation>
    <scope>NUCLEOTIDE SEQUENCE [LARGE SCALE GENOMIC DNA]</scope>
    <source>
        <strain>CFT073 / ATCC 700928 / UPEC</strain>
    </source>
</reference>
<feature type="chain" id="PRO_0000136071" description="Quinate/shikimate dehydrogenase">
    <location>
        <begin position="1"/>
        <end position="288"/>
    </location>
</feature>
<feature type="binding site" evidence="1">
    <location>
        <position position="71"/>
    </location>
    <ligand>
        <name>substrate</name>
    </ligand>
</feature>
<feature type="binding site" evidence="1">
    <location>
        <position position="107"/>
    </location>
    <ligand>
        <name>substrate</name>
    </ligand>
</feature>
<feature type="binding site" evidence="1">
    <location>
        <begin position="132"/>
        <end position="135"/>
    </location>
    <ligand>
        <name>NAD(+)</name>
        <dbReference type="ChEBI" id="CHEBI:57540"/>
    </ligand>
</feature>
<feature type="binding site" evidence="1">
    <location>
        <begin position="155"/>
        <end position="158"/>
    </location>
    <ligand>
        <name>NAD(+)</name>
        <dbReference type="ChEBI" id="CHEBI:57540"/>
    </ligand>
</feature>
<feature type="binding site" evidence="1">
    <location>
        <position position="205"/>
    </location>
    <ligand>
        <name>NAD(+)</name>
        <dbReference type="ChEBI" id="CHEBI:57540"/>
    </ligand>
</feature>
<feature type="binding site" evidence="1">
    <location>
        <begin position="232"/>
        <end position="235"/>
    </location>
    <ligand>
        <name>NAD(+)</name>
        <dbReference type="ChEBI" id="CHEBI:57540"/>
    </ligand>
</feature>
<feature type="binding site" evidence="1">
    <location>
        <position position="255"/>
    </location>
    <ligand>
        <name>NAD(+)</name>
        <dbReference type="ChEBI" id="CHEBI:57540"/>
    </ligand>
</feature>
<evidence type="ECO:0000255" key="1">
    <source>
        <dbReference type="HAMAP-Rule" id="MF_01578"/>
    </source>
</evidence>
<gene>
    <name evidence="1" type="primary">ydiB</name>
    <name type="ordered locus">c2087</name>
</gene>
<proteinExistence type="inferred from homology"/>
<keyword id="KW-0028">Amino-acid biosynthesis</keyword>
<keyword id="KW-0057">Aromatic amino acid biosynthesis</keyword>
<keyword id="KW-0520">NAD</keyword>
<keyword id="KW-0521">NADP</keyword>
<keyword id="KW-0560">Oxidoreductase</keyword>
<keyword id="KW-1185">Reference proteome</keyword>
<accession>P0A6D6</accession>
<accession>P28244</accession>
<accession>P77647</accession>
<name>YDIB_ECOL6</name>
<comment type="function">
    <text evidence="1">The actual biological function of YdiB remains unclear, nor is it known whether 3-dehydroshikimate or quinate represents the natural substrate. Catalyzes the reversible NAD-dependent reduction of both 3-dehydroshikimate (DHSA) and 3-dehydroquinate to yield shikimate (SA) and quinate, respectively. It can use both NAD or NADP for catalysis, however it has higher catalytic efficiency with NAD.</text>
</comment>
<comment type="catalytic activity">
    <reaction evidence="1">
        <text>L-quinate + NAD(+) = 3-dehydroquinate + NADH + H(+)</text>
        <dbReference type="Rhea" id="RHEA:22364"/>
        <dbReference type="ChEBI" id="CHEBI:15378"/>
        <dbReference type="ChEBI" id="CHEBI:29751"/>
        <dbReference type="ChEBI" id="CHEBI:32364"/>
        <dbReference type="ChEBI" id="CHEBI:57540"/>
        <dbReference type="ChEBI" id="CHEBI:57945"/>
        <dbReference type="EC" id="1.1.1.282"/>
    </reaction>
</comment>
<comment type="catalytic activity">
    <reaction evidence="1">
        <text>L-quinate + NADP(+) = 3-dehydroquinate + NADPH + H(+)</text>
        <dbReference type="Rhea" id="RHEA:18425"/>
        <dbReference type="ChEBI" id="CHEBI:15378"/>
        <dbReference type="ChEBI" id="CHEBI:29751"/>
        <dbReference type="ChEBI" id="CHEBI:32364"/>
        <dbReference type="ChEBI" id="CHEBI:57783"/>
        <dbReference type="ChEBI" id="CHEBI:58349"/>
        <dbReference type="EC" id="1.1.1.282"/>
    </reaction>
</comment>
<comment type="catalytic activity">
    <reaction evidence="1">
        <text>shikimate + NADP(+) = 3-dehydroshikimate + NADPH + H(+)</text>
        <dbReference type="Rhea" id="RHEA:17737"/>
        <dbReference type="ChEBI" id="CHEBI:15378"/>
        <dbReference type="ChEBI" id="CHEBI:16630"/>
        <dbReference type="ChEBI" id="CHEBI:36208"/>
        <dbReference type="ChEBI" id="CHEBI:57783"/>
        <dbReference type="ChEBI" id="CHEBI:58349"/>
        <dbReference type="EC" id="1.1.1.282"/>
    </reaction>
</comment>
<comment type="catalytic activity">
    <reaction evidence="1">
        <text>shikimate + NAD(+) = 3-dehydroshikimate + NADH + H(+)</text>
        <dbReference type="Rhea" id="RHEA:17741"/>
        <dbReference type="ChEBI" id="CHEBI:15378"/>
        <dbReference type="ChEBI" id="CHEBI:16630"/>
        <dbReference type="ChEBI" id="CHEBI:36208"/>
        <dbReference type="ChEBI" id="CHEBI:57540"/>
        <dbReference type="ChEBI" id="CHEBI:57945"/>
        <dbReference type="EC" id="1.1.1.282"/>
    </reaction>
</comment>
<comment type="pathway">
    <text evidence="1">Metabolic intermediate biosynthesis; chorismate biosynthesis; chorismate from D-erythrose 4-phosphate and phosphoenolpyruvate: step 4/7.</text>
</comment>
<comment type="subunit">
    <text evidence="1">Homodimer.</text>
</comment>
<comment type="similarity">
    <text evidence="1">Belongs to the shikimate dehydrogenase family.</text>
</comment>
<organism>
    <name type="scientific">Escherichia coli O6:H1 (strain CFT073 / ATCC 700928 / UPEC)</name>
    <dbReference type="NCBI Taxonomy" id="199310"/>
    <lineage>
        <taxon>Bacteria</taxon>
        <taxon>Pseudomonadati</taxon>
        <taxon>Pseudomonadota</taxon>
        <taxon>Gammaproteobacteria</taxon>
        <taxon>Enterobacterales</taxon>
        <taxon>Enterobacteriaceae</taxon>
        <taxon>Escherichia</taxon>
    </lineage>
</organism>